<accession>A7ZYL5</accession>
<feature type="chain" id="PRO_1000060600" description="Integration host factor subunit beta">
    <location>
        <begin position="1"/>
        <end position="94"/>
    </location>
</feature>
<dbReference type="EMBL" id="CP000802">
    <property type="protein sequence ID" value="ABV05369.1"/>
    <property type="molecule type" value="Genomic_DNA"/>
</dbReference>
<dbReference type="RefSeq" id="WP_000167336.1">
    <property type="nucleotide sequence ID" value="NC_009800.1"/>
</dbReference>
<dbReference type="SMR" id="A7ZYL5"/>
<dbReference type="GeneID" id="93776505"/>
<dbReference type="KEGG" id="ecx:EcHS_A1018"/>
<dbReference type="HOGENOM" id="CLU_105066_2_0_6"/>
<dbReference type="GO" id="GO:0005694">
    <property type="term" value="C:chromosome"/>
    <property type="evidence" value="ECO:0007669"/>
    <property type="project" value="InterPro"/>
</dbReference>
<dbReference type="GO" id="GO:0005829">
    <property type="term" value="C:cytosol"/>
    <property type="evidence" value="ECO:0007669"/>
    <property type="project" value="TreeGrafter"/>
</dbReference>
<dbReference type="GO" id="GO:0003677">
    <property type="term" value="F:DNA binding"/>
    <property type="evidence" value="ECO:0007669"/>
    <property type="project" value="UniProtKB-UniRule"/>
</dbReference>
<dbReference type="GO" id="GO:0030527">
    <property type="term" value="F:structural constituent of chromatin"/>
    <property type="evidence" value="ECO:0007669"/>
    <property type="project" value="InterPro"/>
</dbReference>
<dbReference type="GO" id="GO:0006310">
    <property type="term" value="P:DNA recombination"/>
    <property type="evidence" value="ECO:0007669"/>
    <property type="project" value="UniProtKB-UniRule"/>
</dbReference>
<dbReference type="GO" id="GO:0006355">
    <property type="term" value="P:regulation of DNA-templated transcription"/>
    <property type="evidence" value="ECO:0007669"/>
    <property type="project" value="UniProtKB-UniRule"/>
</dbReference>
<dbReference type="GO" id="GO:0006417">
    <property type="term" value="P:regulation of translation"/>
    <property type="evidence" value="ECO:0007669"/>
    <property type="project" value="UniProtKB-UniRule"/>
</dbReference>
<dbReference type="CDD" id="cd13836">
    <property type="entry name" value="IHF_B"/>
    <property type="match status" value="1"/>
</dbReference>
<dbReference type="FunFam" id="4.10.520.10:FF:000003">
    <property type="entry name" value="Integration host factor subunit beta"/>
    <property type="match status" value="1"/>
</dbReference>
<dbReference type="Gene3D" id="4.10.520.10">
    <property type="entry name" value="IHF-like DNA-binding proteins"/>
    <property type="match status" value="1"/>
</dbReference>
<dbReference type="HAMAP" id="MF_00381">
    <property type="entry name" value="IHF_beta"/>
    <property type="match status" value="1"/>
</dbReference>
<dbReference type="InterPro" id="IPR000119">
    <property type="entry name" value="Hist_DNA-bd"/>
</dbReference>
<dbReference type="InterPro" id="IPR020816">
    <property type="entry name" value="Histone-like_DNA-bd_CS"/>
</dbReference>
<dbReference type="InterPro" id="IPR010992">
    <property type="entry name" value="IHF-like_DNA-bd_dom_sf"/>
</dbReference>
<dbReference type="InterPro" id="IPR005685">
    <property type="entry name" value="IHF_beta"/>
</dbReference>
<dbReference type="NCBIfam" id="TIGR00988">
    <property type="entry name" value="hip"/>
    <property type="match status" value="1"/>
</dbReference>
<dbReference type="NCBIfam" id="NF001222">
    <property type="entry name" value="PRK00199.1"/>
    <property type="match status" value="1"/>
</dbReference>
<dbReference type="PANTHER" id="PTHR33175">
    <property type="entry name" value="DNA-BINDING PROTEIN HU"/>
    <property type="match status" value="1"/>
</dbReference>
<dbReference type="PANTHER" id="PTHR33175:SF5">
    <property type="entry name" value="INTEGRATION HOST FACTOR SUBUNIT BETA"/>
    <property type="match status" value="1"/>
</dbReference>
<dbReference type="Pfam" id="PF00216">
    <property type="entry name" value="Bac_DNA_binding"/>
    <property type="match status" value="1"/>
</dbReference>
<dbReference type="PRINTS" id="PR01727">
    <property type="entry name" value="DNABINDINGHU"/>
</dbReference>
<dbReference type="SMART" id="SM00411">
    <property type="entry name" value="BHL"/>
    <property type="match status" value="1"/>
</dbReference>
<dbReference type="SUPFAM" id="SSF47729">
    <property type="entry name" value="IHF-like DNA-binding proteins"/>
    <property type="match status" value="1"/>
</dbReference>
<dbReference type="PROSITE" id="PS00045">
    <property type="entry name" value="HISTONE_LIKE"/>
    <property type="match status" value="1"/>
</dbReference>
<reference key="1">
    <citation type="journal article" date="2008" name="J. Bacteriol.">
        <title>The pangenome structure of Escherichia coli: comparative genomic analysis of E. coli commensal and pathogenic isolates.</title>
        <authorList>
            <person name="Rasko D.A."/>
            <person name="Rosovitz M.J."/>
            <person name="Myers G.S.A."/>
            <person name="Mongodin E.F."/>
            <person name="Fricke W.F."/>
            <person name="Gajer P."/>
            <person name="Crabtree J."/>
            <person name="Sebaihia M."/>
            <person name="Thomson N.R."/>
            <person name="Chaudhuri R."/>
            <person name="Henderson I.R."/>
            <person name="Sperandio V."/>
            <person name="Ravel J."/>
        </authorList>
    </citation>
    <scope>NUCLEOTIDE SEQUENCE [LARGE SCALE GENOMIC DNA]</scope>
    <source>
        <strain>HS</strain>
    </source>
</reference>
<evidence type="ECO:0000255" key="1">
    <source>
        <dbReference type="HAMAP-Rule" id="MF_00381"/>
    </source>
</evidence>
<name>IHFB_ECOHS</name>
<organism>
    <name type="scientific">Escherichia coli O9:H4 (strain HS)</name>
    <dbReference type="NCBI Taxonomy" id="331112"/>
    <lineage>
        <taxon>Bacteria</taxon>
        <taxon>Pseudomonadati</taxon>
        <taxon>Pseudomonadota</taxon>
        <taxon>Gammaproteobacteria</taxon>
        <taxon>Enterobacterales</taxon>
        <taxon>Enterobacteriaceae</taxon>
        <taxon>Escherichia</taxon>
    </lineage>
</organism>
<keyword id="KW-0233">DNA recombination</keyword>
<keyword id="KW-0238">DNA-binding</keyword>
<keyword id="KW-0804">Transcription</keyword>
<keyword id="KW-0805">Transcription regulation</keyword>
<keyword id="KW-0810">Translation regulation</keyword>
<sequence length="94" mass="10651">MTKSELIERLATQQSHIPAKTVEDAVKEMLEHMASTLAQGERIEIRGFGSFSLHYRAPRTGRNPKTGDKVELEGKYVPHFKPGKELRDRANIYG</sequence>
<comment type="function">
    <text evidence="1">This protein is one of the two subunits of integration host factor, a specific DNA-binding protein that functions in genetic recombination as well as in transcriptional and translational control.</text>
</comment>
<comment type="subunit">
    <text evidence="1">Heterodimer of an alpha and a beta chain.</text>
</comment>
<comment type="similarity">
    <text evidence="1">Belongs to the bacterial histone-like protein family.</text>
</comment>
<proteinExistence type="inferred from homology"/>
<protein>
    <recommendedName>
        <fullName evidence="1">Integration host factor subunit beta</fullName>
        <shortName evidence="1">IHF-beta</shortName>
    </recommendedName>
</protein>
<gene>
    <name evidence="1" type="primary">ihfB</name>
    <name evidence="1" type="synonym">himD</name>
    <name type="ordered locus">EcHS_A1018</name>
</gene>